<proteinExistence type="inferred from homology"/>
<comment type="similarity">
    <text evidence="1">Belongs to the UPF0102 family.</text>
</comment>
<gene>
    <name type="ordered locus">AHA_3896</name>
</gene>
<dbReference type="EMBL" id="CP000462">
    <property type="protein sequence ID" value="ABK36729.1"/>
    <property type="molecule type" value="Genomic_DNA"/>
</dbReference>
<dbReference type="RefSeq" id="WP_011707590.1">
    <property type="nucleotide sequence ID" value="NC_008570.1"/>
</dbReference>
<dbReference type="RefSeq" id="YP_858335.1">
    <property type="nucleotide sequence ID" value="NC_008570.1"/>
</dbReference>
<dbReference type="SMR" id="A0KPY4"/>
<dbReference type="STRING" id="380703.AHA_3896"/>
<dbReference type="EnsemblBacteria" id="ABK36729">
    <property type="protein sequence ID" value="ABK36729"/>
    <property type="gene ID" value="AHA_3896"/>
</dbReference>
<dbReference type="GeneID" id="4488208"/>
<dbReference type="KEGG" id="aha:AHA_3896"/>
<dbReference type="PATRIC" id="fig|380703.7.peg.3866"/>
<dbReference type="eggNOG" id="COG0792">
    <property type="taxonomic scope" value="Bacteria"/>
</dbReference>
<dbReference type="HOGENOM" id="CLU_115353_1_0_6"/>
<dbReference type="OrthoDB" id="9794876at2"/>
<dbReference type="Proteomes" id="UP000000756">
    <property type="component" value="Chromosome"/>
</dbReference>
<dbReference type="GO" id="GO:0003676">
    <property type="term" value="F:nucleic acid binding"/>
    <property type="evidence" value="ECO:0007669"/>
    <property type="project" value="InterPro"/>
</dbReference>
<dbReference type="CDD" id="cd20736">
    <property type="entry name" value="PoNe_Nuclease"/>
    <property type="match status" value="1"/>
</dbReference>
<dbReference type="Gene3D" id="3.40.1350.10">
    <property type="match status" value="1"/>
</dbReference>
<dbReference type="HAMAP" id="MF_00048">
    <property type="entry name" value="UPF0102"/>
    <property type="match status" value="1"/>
</dbReference>
<dbReference type="InterPro" id="IPR011335">
    <property type="entry name" value="Restrct_endonuc-II-like"/>
</dbReference>
<dbReference type="InterPro" id="IPR011856">
    <property type="entry name" value="tRNA_endonuc-like_dom_sf"/>
</dbReference>
<dbReference type="InterPro" id="IPR003509">
    <property type="entry name" value="UPF0102_YraN-like"/>
</dbReference>
<dbReference type="NCBIfam" id="NF009150">
    <property type="entry name" value="PRK12497.1-3"/>
    <property type="match status" value="1"/>
</dbReference>
<dbReference type="NCBIfam" id="TIGR00252">
    <property type="entry name" value="YraN family protein"/>
    <property type="match status" value="1"/>
</dbReference>
<dbReference type="PANTHER" id="PTHR34039">
    <property type="entry name" value="UPF0102 PROTEIN YRAN"/>
    <property type="match status" value="1"/>
</dbReference>
<dbReference type="PANTHER" id="PTHR34039:SF1">
    <property type="entry name" value="UPF0102 PROTEIN YRAN"/>
    <property type="match status" value="1"/>
</dbReference>
<dbReference type="Pfam" id="PF02021">
    <property type="entry name" value="UPF0102"/>
    <property type="match status" value="1"/>
</dbReference>
<dbReference type="SUPFAM" id="SSF52980">
    <property type="entry name" value="Restriction endonuclease-like"/>
    <property type="match status" value="1"/>
</dbReference>
<name>Y3896_AERHH</name>
<protein>
    <recommendedName>
        <fullName evidence="1">UPF0102 protein AHA_3896</fullName>
    </recommendedName>
</protein>
<sequence>MKGLLARMHQQWQNLFPSAPSKGQHFEQLAERWLQARGLQPVTRNYRCRGGEIDLIMRQGETLVFVEVRYRSQTSHGGAAASVTRCKQHKIVLAARHYFKQHAINEASQACRFDVIAFEGDQPDWIQNAF</sequence>
<keyword id="KW-1185">Reference proteome</keyword>
<reference key="1">
    <citation type="journal article" date="2006" name="J. Bacteriol.">
        <title>Genome sequence of Aeromonas hydrophila ATCC 7966T: jack of all trades.</title>
        <authorList>
            <person name="Seshadri R."/>
            <person name="Joseph S.W."/>
            <person name="Chopra A.K."/>
            <person name="Sha J."/>
            <person name="Shaw J."/>
            <person name="Graf J."/>
            <person name="Haft D.H."/>
            <person name="Wu M."/>
            <person name="Ren Q."/>
            <person name="Rosovitz M.J."/>
            <person name="Madupu R."/>
            <person name="Tallon L."/>
            <person name="Kim M."/>
            <person name="Jin S."/>
            <person name="Vuong H."/>
            <person name="Stine O.C."/>
            <person name="Ali A."/>
            <person name="Horneman A.J."/>
            <person name="Heidelberg J.F."/>
        </authorList>
    </citation>
    <scope>NUCLEOTIDE SEQUENCE [LARGE SCALE GENOMIC DNA]</scope>
    <source>
        <strain>ATCC 7966 / DSM 30187 / BCRC 13018 / CCUG 14551 / JCM 1027 / KCTC 2358 / NCIMB 9240 / NCTC 8049</strain>
    </source>
</reference>
<evidence type="ECO:0000255" key="1">
    <source>
        <dbReference type="HAMAP-Rule" id="MF_00048"/>
    </source>
</evidence>
<organism>
    <name type="scientific">Aeromonas hydrophila subsp. hydrophila (strain ATCC 7966 / DSM 30187 / BCRC 13018 / CCUG 14551 / JCM 1027 / KCTC 2358 / NCIMB 9240 / NCTC 8049)</name>
    <dbReference type="NCBI Taxonomy" id="380703"/>
    <lineage>
        <taxon>Bacteria</taxon>
        <taxon>Pseudomonadati</taxon>
        <taxon>Pseudomonadota</taxon>
        <taxon>Gammaproteobacteria</taxon>
        <taxon>Aeromonadales</taxon>
        <taxon>Aeromonadaceae</taxon>
        <taxon>Aeromonas</taxon>
    </lineage>
</organism>
<accession>A0KPY4</accession>
<feature type="chain" id="PRO_0000336114" description="UPF0102 protein AHA_3896">
    <location>
        <begin position="1"/>
        <end position="130"/>
    </location>
</feature>